<comment type="similarity">
    <text evidence="1">Belongs to the universal ribosomal protein uL29 family.</text>
</comment>
<feature type="chain" id="PRO_0000130456" description="Large ribosomal subunit protein uL29">
    <location>
        <begin position="1"/>
        <end position="69"/>
    </location>
</feature>
<proteinExistence type="inferred from homology"/>
<organism>
    <name type="scientific">Staphylococcus aureus (strain Mu50 / ATCC 700699)</name>
    <dbReference type="NCBI Taxonomy" id="158878"/>
    <lineage>
        <taxon>Bacteria</taxon>
        <taxon>Bacillati</taxon>
        <taxon>Bacillota</taxon>
        <taxon>Bacilli</taxon>
        <taxon>Bacillales</taxon>
        <taxon>Staphylococcaceae</taxon>
        <taxon>Staphylococcus</taxon>
    </lineage>
</organism>
<name>RL29_STAAM</name>
<evidence type="ECO:0000255" key="1">
    <source>
        <dbReference type="HAMAP-Rule" id="MF_00374"/>
    </source>
</evidence>
<evidence type="ECO:0000305" key="2"/>
<dbReference type="EMBL" id="BA000017">
    <property type="protein sequence ID" value="BAB58404.1"/>
    <property type="molecule type" value="Genomic_DNA"/>
</dbReference>
<dbReference type="RefSeq" id="WP_000644737.1">
    <property type="nucleotide sequence ID" value="NC_002758.2"/>
</dbReference>
<dbReference type="SMR" id="P66172"/>
<dbReference type="GeneID" id="98346554"/>
<dbReference type="KEGG" id="sav:SAV2242"/>
<dbReference type="HOGENOM" id="CLU_158491_5_2_9"/>
<dbReference type="PhylomeDB" id="P66172"/>
<dbReference type="Proteomes" id="UP000002481">
    <property type="component" value="Chromosome"/>
</dbReference>
<dbReference type="GO" id="GO:0022625">
    <property type="term" value="C:cytosolic large ribosomal subunit"/>
    <property type="evidence" value="ECO:0007669"/>
    <property type="project" value="TreeGrafter"/>
</dbReference>
<dbReference type="GO" id="GO:0003735">
    <property type="term" value="F:structural constituent of ribosome"/>
    <property type="evidence" value="ECO:0007669"/>
    <property type="project" value="InterPro"/>
</dbReference>
<dbReference type="GO" id="GO:0006412">
    <property type="term" value="P:translation"/>
    <property type="evidence" value="ECO:0007669"/>
    <property type="project" value="UniProtKB-UniRule"/>
</dbReference>
<dbReference type="CDD" id="cd00427">
    <property type="entry name" value="Ribosomal_L29_HIP"/>
    <property type="match status" value="1"/>
</dbReference>
<dbReference type="FunFam" id="1.10.287.310:FF:000001">
    <property type="entry name" value="50S ribosomal protein L29"/>
    <property type="match status" value="1"/>
</dbReference>
<dbReference type="Gene3D" id="1.10.287.310">
    <property type="match status" value="1"/>
</dbReference>
<dbReference type="HAMAP" id="MF_00374">
    <property type="entry name" value="Ribosomal_uL29"/>
    <property type="match status" value="1"/>
</dbReference>
<dbReference type="InterPro" id="IPR050063">
    <property type="entry name" value="Ribosomal_protein_uL29"/>
</dbReference>
<dbReference type="InterPro" id="IPR001854">
    <property type="entry name" value="Ribosomal_uL29"/>
</dbReference>
<dbReference type="InterPro" id="IPR036049">
    <property type="entry name" value="Ribosomal_uL29_sf"/>
</dbReference>
<dbReference type="NCBIfam" id="TIGR00012">
    <property type="entry name" value="L29"/>
    <property type="match status" value="1"/>
</dbReference>
<dbReference type="PANTHER" id="PTHR10916">
    <property type="entry name" value="60S RIBOSOMAL PROTEIN L35/50S RIBOSOMAL PROTEIN L29"/>
    <property type="match status" value="1"/>
</dbReference>
<dbReference type="PANTHER" id="PTHR10916:SF0">
    <property type="entry name" value="LARGE RIBOSOMAL SUBUNIT PROTEIN UL29C"/>
    <property type="match status" value="1"/>
</dbReference>
<dbReference type="Pfam" id="PF00831">
    <property type="entry name" value="Ribosomal_L29"/>
    <property type="match status" value="1"/>
</dbReference>
<dbReference type="SUPFAM" id="SSF46561">
    <property type="entry name" value="Ribosomal protein L29 (L29p)"/>
    <property type="match status" value="1"/>
</dbReference>
<keyword id="KW-0687">Ribonucleoprotein</keyword>
<keyword id="KW-0689">Ribosomal protein</keyword>
<accession>P66172</accession>
<accession>Q99S29</accession>
<protein>
    <recommendedName>
        <fullName evidence="1">Large ribosomal subunit protein uL29</fullName>
    </recommendedName>
    <alternativeName>
        <fullName evidence="2">50S ribosomal protein L29</fullName>
    </alternativeName>
</protein>
<reference key="1">
    <citation type="journal article" date="2001" name="Lancet">
        <title>Whole genome sequencing of meticillin-resistant Staphylococcus aureus.</title>
        <authorList>
            <person name="Kuroda M."/>
            <person name="Ohta T."/>
            <person name="Uchiyama I."/>
            <person name="Baba T."/>
            <person name="Yuzawa H."/>
            <person name="Kobayashi I."/>
            <person name="Cui L."/>
            <person name="Oguchi A."/>
            <person name="Aoki K."/>
            <person name="Nagai Y."/>
            <person name="Lian J.-Q."/>
            <person name="Ito T."/>
            <person name="Kanamori M."/>
            <person name="Matsumaru H."/>
            <person name="Maruyama A."/>
            <person name="Murakami H."/>
            <person name="Hosoyama A."/>
            <person name="Mizutani-Ui Y."/>
            <person name="Takahashi N.K."/>
            <person name="Sawano T."/>
            <person name="Inoue R."/>
            <person name="Kaito C."/>
            <person name="Sekimizu K."/>
            <person name="Hirakawa H."/>
            <person name="Kuhara S."/>
            <person name="Goto S."/>
            <person name="Yabuzaki J."/>
            <person name="Kanehisa M."/>
            <person name="Yamashita A."/>
            <person name="Oshima K."/>
            <person name="Furuya K."/>
            <person name="Yoshino C."/>
            <person name="Shiba T."/>
            <person name="Hattori M."/>
            <person name="Ogasawara N."/>
            <person name="Hayashi H."/>
            <person name="Hiramatsu K."/>
        </authorList>
    </citation>
    <scope>NUCLEOTIDE SEQUENCE [LARGE SCALE GENOMIC DNA]</scope>
    <source>
        <strain>Mu50 / ATCC 700699</strain>
    </source>
</reference>
<gene>
    <name evidence="1" type="primary">rpmC</name>
    <name type="ordered locus">SAV2242</name>
</gene>
<sequence>MKAKEIRDLTTSEIEEQIKSSKEELFNLRFQLATGQLEETARIRTVRKTIARLKTVAREREIEQSKANQ</sequence>